<dbReference type="EC" id="1.2.1.70"/>
<dbReference type="EMBL" id="AJ131561">
    <property type="protein sequence ID" value="CAB59204.1"/>
    <property type="molecule type" value="Genomic_DNA"/>
</dbReference>
<dbReference type="EMBL" id="AE009439">
    <property type="protein sequence ID" value="AAM01417.1"/>
    <property type="molecule type" value="Genomic_DNA"/>
</dbReference>
<dbReference type="PIR" id="T45026">
    <property type="entry name" value="T45026"/>
</dbReference>
<dbReference type="RefSeq" id="WP_011018572.1">
    <property type="nucleotide sequence ID" value="NC_003551.1"/>
</dbReference>
<dbReference type="PDB" id="1GPJ">
    <property type="method" value="X-ray"/>
    <property type="resolution" value="1.95 A"/>
    <property type="chains" value="A=1-404"/>
</dbReference>
<dbReference type="PDBsum" id="1GPJ"/>
<dbReference type="SMR" id="Q9UXR8"/>
<dbReference type="FunCoup" id="Q9UXR8">
    <property type="interactions" value="94"/>
</dbReference>
<dbReference type="STRING" id="190192.MK0200"/>
<dbReference type="PaxDb" id="190192-MK0200"/>
<dbReference type="EnsemblBacteria" id="AAM01417">
    <property type="protein sequence ID" value="AAM01417"/>
    <property type="gene ID" value="MK0200"/>
</dbReference>
<dbReference type="GeneID" id="1477503"/>
<dbReference type="KEGG" id="mka:MK0200"/>
<dbReference type="PATRIC" id="fig|190192.8.peg.201"/>
<dbReference type="HOGENOM" id="CLU_035113_0_0_2"/>
<dbReference type="InParanoid" id="Q9UXR8"/>
<dbReference type="OrthoDB" id="4562at2157"/>
<dbReference type="BRENDA" id="1.2.1.70">
    <property type="organism ID" value="3274"/>
</dbReference>
<dbReference type="UniPathway" id="UPA00251">
    <property type="reaction ID" value="UER00316"/>
</dbReference>
<dbReference type="EvolutionaryTrace" id="Q9UXR8"/>
<dbReference type="Proteomes" id="UP000001826">
    <property type="component" value="Chromosome"/>
</dbReference>
<dbReference type="GO" id="GO:0008883">
    <property type="term" value="F:glutamyl-tRNA reductase activity"/>
    <property type="evidence" value="ECO:0007669"/>
    <property type="project" value="UniProtKB-UniRule"/>
</dbReference>
<dbReference type="GO" id="GO:0050661">
    <property type="term" value="F:NADP binding"/>
    <property type="evidence" value="ECO:0007669"/>
    <property type="project" value="InterPro"/>
</dbReference>
<dbReference type="GO" id="GO:0019353">
    <property type="term" value="P:protoporphyrinogen IX biosynthetic process from glutamate"/>
    <property type="evidence" value="ECO:0007669"/>
    <property type="project" value="TreeGrafter"/>
</dbReference>
<dbReference type="CDD" id="cd05213">
    <property type="entry name" value="NAD_bind_Glutamyl_tRNA_reduct"/>
    <property type="match status" value="1"/>
</dbReference>
<dbReference type="FunFam" id="3.30.460.30:FF:000001">
    <property type="entry name" value="Glutamyl-tRNA reductase"/>
    <property type="match status" value="1"/>
</dbReference>
<dbReference type="FunFam" id="3.40.50.720:FF:000031">
    <property type="entry name" value="Glutamyl-tRNA reductase"/>
    <property type="match status" value="1"/>
</dbReference>
<dbReference type="Gene3D" id="1.10.1200.70">
    <property type="entry name" value="Glutamyl tRNA-reductase dimerization domain"/>
    <property type="match status" value="1"/>
</dbReference>
<dbReference type="Gene3D" id="3.30.460.30">
    <property type="entry name" value="Glutamyl-tRNA reductase, N-terminal domain"/>
    <property type="match status" value="1"/>
</dbReference>
<dbReference type="Gene3D" id="3.40.50.720">
    <property type="entry name" value="NAD(P)-binding Rossmann-like Domain"/>
    <property type="match status" value="1"/>
</dbReference>
<dbReference type="HAMAP" id="MF_00087">
    <property type="entry name" value="Glu_tRNA_reductase"/>
    <property type="match status" value="1"/>
</dbReference>
<dbReference type="InterPro" id="IPR000343">
    <property type="entry name" value="4pyrrol_synth_GluRdtase"/>
</dbReference>
<dbReference type="InterPro" id="IPR015896">
    <property type="entry name" value="4pyrrol_synth_GluRdtase_dimer"/>
</dbReference>
<dbReference type="InterPro" id="IPR015895">
    <property type="entry name" value="4pyrrol_synth_GluRdtase_N"/>
</dbReference>
<dbReference type="InterPro" id="IPR018214">
    <property type="entry name" value="GluRdtase_CS"/>
</dbReference>
<dbReference type="InterPro" id="IPR036453">
    <property type="entry name" value="GluRdtase_dimer_dom_sf"/>
</dbReference>
<dbReference type="InterPro" id="IPR036343">
    <property type="entry name" value="GluRdtase_N_sf"/>
</dbReference>
<dbReference type="InterPro" id="IPR036291">
    <property type="entry name" value="NAD(P)-bd_dom_sf"/>
</dbReference>
<dbReference type="InterPro" id="IPR006151">
    <property type="entry name" value="Shikm_DH/Glu-tRNA_Rdtase"/>
</dbReference>
<dbReference type="NCBIfam" id="TIGR01035">
    <property type="entry name" value="hemA"/>
    <property type="match status" value="1"/>
</dbReference>
<dbReference type="PANTHER" id="PTHR43013">
    <property type="entry name" value="GLUTAMYL-TRNA REDUCTASE"/>
    <property type="match status" value="1"/>
</dbReference>
<dbReference type="PANTHER" id="PTHR43013:SF1">
    <property type="entry name" value="GLUTAMYL-TRNA REDUCTASE"/>
    <property type="match status" value="1"/>
</dbReference>
<dbReference type="Pfam" id="PF00745">
    <property type="entry name" value="GlutR_dimer"/>
    <property type="match status" value="1"/>
</dbReference>
<dbReference type="Pfam" id="PF05201">
    <property type="entry name" value="GlutR_N"/>
    <property type="match status" value="1"/>
</dbReference>
<dbReference type="Pfam" id="PF01488">
    <property type="entry name" value="Shikimate_DH"/>
    <property type="match status" value="1"/>
</dbReference>
<dbReference type="PIRSF" id="PIRSF000445">
    <property type="entry name" value="4pyrrol_synth_GluRdtase"/>
    <property type="match status" value="1"/>
</dbReference>
<dbReference type="SUPFAM" id="SSF69742">
    <property type="entry name" value="Glutamyl tRNA-reductase catalytic, N-terminal domain"/>
    <property type="match status" value="1"/>
</dbReference>
<dbReference type="SUPFAM" id="SSF69075">
    <property type="entry name" value="Glutamyl tRNA-reductase dimerization domain"/>
    <property type="match status" value="1"/>
</dbReference>
<dbReference type="SUPFAM" id="SSF51735">
    <property type="entry name" value="NAD(P)-binding Rossmann-fold domains"/>
    <property type="match status" value="1"/>
</dbReference>
<dbReference type="PROSITE" id="PS00747">
    <property type="entry name" value="GLUTR"/>
    <property type="match status" value="1"/>
</dbReference>
<sequence>MEDLVCVGITHKEAEVEELEKARFESDEAVRDIVESFGLSGCVLLQTCNRVEVYASGARDRAEELGDLIHDDAWVKRGSEAVRHLFRVACGLESMMVGEQEILRQVKKAYDRAARLGTLDEALKIVFRRAINLGKRAREETRISEGAVSIGSAAVELAERELGSLHDKTVLVVGAGEMGKTVAKSLVDRGVRAVLVANRTYERAVELARDLGGEAVRFDELVDHLARSDVVVSATAAPHPVIHVDDVREALRKRDRRSPILIIDIANPRDVEEGVENIEDVEVRTIDDLRVIARENLERRRKEIPKVEKLIEEELSTVEEELEKLKERRLVADVAKSLHEIKDRELERALRRLKTGDPENVLQDFAEAYTKRLINVLTSAIMELPDEYRRAACRALRRASELNG</sequence>
<gene>
    <name type="primary">hemA</name>
    <name type="ordered locus">MK0200</name>
</gene>
<feature type="chain" id="PRO_0000114102" description="Glutamyl-tRNA reductase">
    <location>
        <begin position="1"/>
        <end position="404"/>
    </location>
</feature>
<feature type="active site" description="Nucleophile">
    <location>
        <position position="48"/>
    </location>
</feature>
<feature type="binding site">
    <location>
        <begin position="47"/>
        <end position="50"/>
    </location>
    <ligand>
        <name>substrate</name>
    </ligand>
</feature>
<feature type="binding site">
    <location>
        <position position="94"/>
    </location>
    <ligand>
        <name>substrate</name>
    </ligand>
</feature>
<feature type="binding site">
    <location>
        <begin position="99"/>
        <end position="101"/>
    </location>
    <ligand>
        <name>substrate</name>
    </ligand>
</feature>
<feature type="binding site">
    <location>
        <position position="105"/>
    </location>
    <ligand>
        <name>substrate</name>
    </ligand>
</feature>
<feature type="binding site" evidence="3">
    <location>
        <begin position="174"/>
        <end position="179"/>
    </location>
    <ligand>
        <name>NADP(+)</name>
        <dbReference type="ChEBI" id="CHEBI:58349"/>
    </ligand>
</feature>
<feature type="site" description="Important for activity">
    <location>
        <position position="84"/>
    </location>
</feature>
<feature type="mutagenesis site" description="Complete loss of activity." evidence="1">
    <original>C</original>
    <variation>S</variation>
    <location>
        <position position="48"/>
    </location>
</feature>
<feature type="mutagenesis site" description="Complete loss of activity." evidence="1">
    <original>H</original>
    <variation>A</variation>
    <location>
        <position position="84"/>
    </location>
</feature>
<feature type="mutagenesis site" description="30% of wild-type reductase activity. 15% of wild-type esterase activity." evidence="1">
    <original>H</original>
    <variation>N</variation>
    <location>
        <position position="84"/>
    </location>
</feature>
<feature type="strand" evidence="4">
    <location>
        <begin position="4"/>
        <end position="10"/>
    </location>
</feature>
<feature type="turn" evidence="4">
    <location>
        <begin position="11"/>
        <end position="13"/>
    </location>
</feature>
<feature type="helix" evidence="4">
    <location>
        <begin position="16"/>
        <end position="22"/>
    </location>
</feature>
<feature type="helix" evidence="4">
    <location>
        <begin position="29"/>
        <end position="36"/>
    </location>
</feature>
<feature type="strand" evidence="4">
    <location>
        <begin position="40"/>
        <end position="47"/>
    </location>
</feature>
<feature type="strand" evidence="4">
    <location>
        <begin position="50"/>
        <end position="57"/>
    </location>
</feature>
<feature type="helix" evidence="4">
    <location>
        <begin position="62"/>
        <end position="67"/>
    </location>
</feature>
<feature type="strand" evidence="4">
    <location>
        <begin position="74"/>
        <end position="77"/>
    </location>
</feature>
<feature type="helix" evidence="4">
    <location>
        <begin position="78"/>
        <end position="89"/>
    </location>
</feature>
<feature type="turn" evidence="4">
    <location>
        <begin position="90"/>
        <end position="93"/>
    </location>
</feature>
<feature type="strand" evidence="4">
    <location>
        <begin position="94"/>
        <end position="96"/>
    </location>
</feature>
<feature type="helix" evidence="4">
    <location>
        <begin position="100"/>
        <end position="116"/>
    </location>
</feature>
<feature type="helix" evidence="4">
    <location>
        <begin position="121"/>
        <end position="140"/>
    </location>
</feature>
<feature type="helix" evidence="4">
    <location>
        <begin position="150"/>
        <end position="162"/>
    </location>
</feature>
<feature type="strand" evidence="4">
    <location>
        <begin position="169"/>
        <end position="174"/>
    </location>
</feature>
<feature type="helix" evidence="4">
    <location>
        <begin position="177"/>
        <end position="189"/>
    </location>
</feature>
<feature type="strand" evidence="4">
    <location>
        <begin position="192"/>
        <end position="197"/>
    </location>
</feature>
<feature type="helix" evidence="4">
    <location>
        <begin position="201"/>
        <end position="211"/>
    </location>
</feature>
<feature type="helix" evidence="4">
    <location>
        <begin position="218"/>
        <end position="220"/>
    </location>
</feature>
<feature type="helix" evidence="4">
    <location>
        <begin position="221"/>
        <end position="226"/>
    </location>
</feature>
<feature type="strand" evidence="4">
    <location>
        <begin position="229"/>
        <end position="233"/>
    </location>
</feature>
<feature type="strand" evidence="4">
    <location>
        <begin position="236"/>
        <end position="239"/>
    </location>
</feature>
<feature type="helix" evidence="4">
    <location>
        <begin position="244"/>
        <end position="253"/>
    </location>
</feature>
<feature type="strand" evidence="4">
    <location>
        <begin position="260"/>
        <end position="264"/>
    </location>
</feature>
<feature type="helix" evidence="4">
    <location>
        <begin position="275"/>
        <end position="277"/>
    </location>
</feature>
<feature type="strand" evidence="4">
    <location>
        <begin position="281"/>
        <end position="285"/>
    </location>
</feature>
<feature type="helix" evidence="4">
    <location>
        <begin position="286"/>
        <end position="301"/>
    </location>
</feature>
<feature type="helix" evidence="4">
    <location>
        <begin position="304"/>
        <end position="350"/>
    </location>
</feature>
<feature type="helix" evidence="4">
    <location>
        <begin position="365"/>
        <end position="382"/>
    </location>
</feature>
<feature type="turn" evidence="4">
    <location>
        <begin position="386"/>
        <end position="390"/>
    </location>
</feature>
<feature type="helix" evidence="4">
    <location>
        <begin position="391"/>
        <end position="402"/>
    </location>
</feature>
<proteinExistence type="evidence at protein level"/>
<organism>
    <name type="scientific">Methanopyrus kandleri (strain AV19 / DSM 6324 / JCM 9639 / NBRC 100938)</name>
    <dbReference type="NCBI Taxonomy" id="190192"/>
    <lineage>
        <taxon>Archaea</taxon>
        <taxon>Methanobacteriati</taxon>
        <taxon>Methanobacteriota</taxon>
        <taxon>Methanomada group</taxon>
        <taxon>Methanopyri</taxon>
        <taxon>Methanopyrales</taxon>
        <taxon>Methanopyraceae</taxon>
        <taxon>Methanopyrus</taxon>
    </lineage>
</organism>
<comment type="function">
    <text evidence="1">Catalyzes the NADPH-dependent reduction of glutamyl-tRNA(Glu) to glutamate 1-semialdehyde (GSA). In the absence of NADPH, exhibits substrate esterase activity, leading to the release of glutamate from tRNA.</text>
</comment>
<comment type="catalytic activity">
    <reaction>
        <text>(S)-4-amino-5-oxopentanoate + tRNA(Glu) + NADP(+) = L-glutamyl-tRNA(Glu) + NADPH + H(+)</text>
        <dbReference type="Rhea" id="RHEA:12344"/>
        <dbReference type="Rhea" id="RHEA-COMP:9663"/>
        <dbReference type="Rhea" id="RHEA-COMP:9680"/>
        <dbReference type="ChEBI" id="CHEBI:15378"/>
        <dbReference type="ChEBI" id="CHEBI:57501"/>
        <dbReference type="ChEBI" id="CHEBI:57783"/>
        <dbReference type="ChEBI" id="CHEBI:58349"/>
        <dbReference type="ChEBI" id="CHEBI:78442"/>
        <dbReference type="ChEBI" id="CHEBI:78520"/>
        <dbReference type="EC" id="1.2.1.70"/>
    </reaction>
</comment>
<comment type="activity regulation">
    <text>Inhibited by heavy metal compounds, Zn(2+), and heme. Also competitively inhibited by glutamycin.</text>
</comment>
<comment type="biophysicochemical properties">
    <phDependence>
        <text>Optimum pH is 8.1.</text>
    </phDependence>
    <temperatureDependence>
        <text>Optimum temperature is 90 degrees Celsius.</text>
    </temperatureDependence>
</comment>
<comment type="pathway">
    <text>Porphyrin-containing compound metabolism; protoporphyrin-IX biosynthesis; 5-aminolevulinate from L-glutamyl-tRNA(Glu): step 1/2.</text>
</comment>
<comment type="subunit">
    <text evidence="2">Homotetramer.</text>
</comment>
<comment type="mass spectrometry"/>
<comment type="similarity">
    <text evidence="3">Belongs to the glutamyl-tRNA reductase family.</text>
</comment>
<protein>
    <recommendedName>
        <fullName>Glutamyl-tRNA reductase</fullName>
        <shortName>GluTR</shortName>
        <ecNumber>1.2.1.70</ecNumber>
    </recommendedName>
</protein>
<keyword id="KW-0002">3D-structure</keyword>
<keyword id="KW-0903">Direct protein sequencing</keyword>
<keyword id="KW-0521">NADP</keyword>
<keyword id="KW-0560">Oxidoreductase</keyword>
<keyword id="KW-0627">Porphyrin biosynthesis</keyword>
<keyword id="KW-1185">Reference proteome</keyword>
<evidence type="ECO:0000269" key="1">
    <source>
    </source>
</evidence>
<evidence type="ECO:0000269" key="2">
    <source>
    </source>
</evidence>
<evidence type="ECO:0000305" key="3"/>
<evidence type="ECO:0007829" key="4">
    <source>
        <dbReference type="PDB" id="1GPJ"/>
    </source>
</evidence>
<accession>Q9UXR8</accession>
<name>HEM1_METKA</name>
<reference key="1">
    <citation type="journal article" date="1999" name="J. Biol. Chem.">
        <title>Methanopyrus kandleri glutamyl-tRNA reductase.</title>
        <authorList>
            <person name="Moser J."/>
            <person name="Lorenz S."/>
            <person name="Hubschwerlen C."/>
            <person name="Rompf A."/>
            <person name="Jahn D."/>
        </authorList>
    </citation>
    <scope>NUCLEOTIDE SEQUENCE [GENOMIC DNA]</scope>
    <scope>PROTEIN SEQUENCE OF 1-30</scope>
    <scope>FUNCTION</scope>
    <scope>MASS SPECTROMETRY</scope>
    <scope>CATALYTIC MECHANISM</scope>
    <scope>MUTAGENESIS OF CYS-48 AND HIS-84</scope>
</reference>
<reference key="2">
    <citation type="journal article" date="2002" name="Proc. Natl. Acad. Sci. U.S.A.">
        <title>The complete genome of hyperthermophile Methanopyrus kandleri AV19 and monophyly of archaeal methanogens.</title>
        <authorList>
            <person name="Slesarev A.I."/>
            <person name="Mezhevaya K.V."/>
            <person name="Makarova K.S."/>
            <person name="Polushin N.N."/>
            <person name="Shcherbinina O.V."/>
            <person name="Shakhova V.V."/>
            <person name="Belova G.I."/>
            <person name="Aravind L."/>
            <person name="Natale D.A."/>
            <person name="Rogozin I.B."/>
            <person name="Tatusov R.L."/>
            <person name="Wolf Y.I."/>
            <person name="Stetter K.O."/>
            <person name="Malykh A.G."/>
            <person name="Koonin E.V."/>
            <person name="Kozyavkin S.A."/>
        </authorList>
    </citation>
    <scope>NUCLEOTIDE SEQUENCE [LARGE SCALE GENOMIC DNA]</scope>
    <source>
        <strain>AV19 / DSM 6324 / JCM 9639 / NBRC 100938</strain>
    </source>
</reference>
<reference key="3">
    <citation type="journal article" date="2001" name="EMBO J.">
        <title>V-shaped structure of glutamyl-tRNA reductase, the first enzyme of tRNA-dependent tetrapyrrole biosynthesis.</title>
        <authorList>
            <person name="Moser J."/>
            <person name="Schubert W.-D."/>
            <person name="Beier V."/>
            <person name="Bringemeier I."/>
            <person name="Jahn D."/>
            <person name="Heinz D.W."/>
        </authorList>
    </citation>
    <scope>X-RAY CRYSTALLOGRAPHY (1.95 ANGSTROMS) IN COMPLEX WITH SUBSTRATE ANALOG</scope>
    <scope>SUBUNIT</scope>
    <scope>CATALYTIC MECHANISM</scope>
    <scope>DOMAIN</scope>
</reference>